<gene>
    <name type="primary">TIMP1</name>
</gene>
<name>TIMP1_PONAB</name>
<dbReference type="EMBL" id="CR858421">
    <property type="protein sequence ID" value="CAH90650.1"/>
    <property type="molecule type" value="mRNA"/>
</dbReference>
<dbReference type="RefSeq" id="NP_001125351.1">
    <property type="nucleotide sequence ID" value="NM_001131879.1"/>
</dbReference>
<dbReference type="BMRB" id="Q5RC60"/>
<dbReference type="SMR" id="Q5RC60"/>
<dbReference type="FunCoup" id="Q5RC60">
    <property type="interactions" value="285"/>
</dbReference>
<dbReference type="STRING" id="9601.ENSPPYP00000022717"/>
<dbReference type="MEROPS" id="I35.001"/>
<dbReference type="GlyCosmos" id="Q5RC60">
    <property type="glycosylation" value="2 sites, No reported glycans"/>
</dbReference>
<dbReference type="GeneID" id="100172253"/>
<dbReference type="KEGG" id="pon:100172253"/>
<dbReference type="CTD" id="7076"/>
<dbReference type="InParanoid" id="Q5RC60"/>
<dbReference type="OrthoDB" id="6041373at2759"/>
<dbReference type="Proteomes" id="UP000001595">
    <property type="component" value="Unplaced"/>
</dbReference>
<dbReference type="GO" id="GO:0031012">
    <property type="term" value="C:extracellular matrix"/>
    <property type="evidence" value="ECO:0007669"/>
    <property type="project" value="TreeGrafter"/>
</dbReference>
<dbReference type="GO" id="GO:0005615">
    <property type="term" value="C:extracellular space"/>
    <property type="evidence" value="ECO:0000250"/>
    <property type="project" value="UniProtKB"/>
</dbReference>
<dbReference type="GO" id="GO:0005125">
    <property type="term" value="F:cytokine activity"/>
    <property type="evidence" value="ECO:0000250"/>
    <property type="project" value="UniProtKB"/>
</dbReference>
<dbReference type="GO" id="GO:0008083">
    <property type="term" value="F:growth factor activity"/>
    <property type="evidence" value="ECO:0007669"/>
    <property type="project" value="UniProtKB-KW"/>
</dbReference>
<dbReference type="GO" id="GO:0046872">
    <property type="term" value="F:metal ion binding"/>
    <property type="evidence" value="ECO:0007669"/>
    <property type="project" value="UniProtKB-KW"/>
</dbReference>
<dbReference type="GO" id="GO:0008191">
    <property type="term" value="F:metalloendopeptidase inhibitor activity"/>
    <property type="evidence" value="ECO:0000250"/>
    <property type="project" value="UniProtKB"/>
</dbReference>
<dbReference type="GO" id="GO:0002020">
    <property type="term" value="F:protease binding"/>
    <property type="evidence" value="ECO:0007669"/>
    <property type="project" value="TreeGrafter"/>
</dbReference>
<dbReference type="GO" id="GO:0071492">
    <property type="term" value="P:cellular response to UV-A"/>
    <property type="evidence" value="ECO:0000250"/>
    <property type="project" value="UniProtKB"/>
</dbReference>
<dbReference type="GO" id="GO:0043086">
    <property type="term" value="P:negative regulation of catalytic activity"/>
    <property type="evidence" value="ECO:0000250"/>
    <property type="project" value="UniProtKB"/>
</dbReference>
<dbReference type="GO" id="GO:0010951">
    <property type="term" value="P:negative regulation of endopeptidase activity"/>
    <property type="evidence" value="ECO:0000250"/>
    <property type="project" value="UniProtKB"/>
</dbReference>
<dbReference type="GO" id="GO:0051045">
    <property type="term" value="P:negative regulation of membrane protein ectodomain proteolysis"/>
    <property type="evidence" value="ECO:0007669"/>
    <property type="project" value="TreeGrafter"/>
</dbReference>
<dbReference type="GO" id="GO:0008284">
    <property type="term" value="P:positive regulation of cell population proliferation"/>
    <property type="evidence" value="ECO:0000250"/>
    <property type="project" value="UniProtKB"/>
</dbReference>
<dbReference type="GO" id="GO:2001044">
    <property type="term" value="P:regulation of integrin-mediated signaling pathway"/>
    <property type="evidence" value="ECO:0000250"/>
    <property type="project" value="UniProtKB"/>
</dbReference>
<dbReference type="GO" id="GO:0034097">
    <property type="term" value="P:response to cytokine"/>
    <property type="evidence" value="ECO:0007669"/>
    <property type="project" value="TreeGrafter"/>
</dbReference>
<dbReference type="GO" id="GO:0009725">
    <property type="term" value="P:response to hormone"/>
    <property type="evidence" value="ECO:0007669"/>
    <property type="project" value="TreeGrafter"/>
</dbReference>
<dbReference type="CDD" id="cd03585">
    <property type="entry name" value="NTR_TIMP"/>
    <property type="match status" value="1"/>
</dbReference>
<dbReference type="FunFam" id="2.40.50.120:FF:000016">
    <property type="entry name" value="Metalloproteinase inhibitor 1"/>
    <property type="match status" value="1"/>
</dbReference>
<dbReference type="FunFam" id="3.90.370.10:FF:000001">
    <property type="entry name" value="Metalloproteinase inhibitor 3"/>
    <property type="match status" value="1"/>
</dbReference>
<dbReference type="Gene3D" id="2.40.50.120">
    <property type="match status" value="1"/>
</dbReference>
<dbReference type="Gene3D" id="3.90.370.10">
    <property type="entry name" value="Tissue inhibitor of metalloproteinase-1. Chain B, domain 1"/>
    <property type="match status" value="1"/>
</dbReference>
<dbReference type="InterPro" id="IPR001134">
    <property type="entry name" value="Netrin_domain"/>
</dbReference>
<dbReference type="InterPro" id="IPR001820">
    <property type="entry name" value="TIMP"/>
</dbReference>
<dbReference type="InterPro" id="IPR008993">
    <property type="entry name" value="TIMP-like_OB-fold"/>
</dbReference>
<dbReference type="InterPro" id="IPR027465">
    <property type="entry name" value="TIMP_C"/>
</dbReference>
<dbReference type="InterPro" id="IPR030490">
    <property type="entry name" value="TIMP_CS"/>
</dbReference>
<dbReference type="PANTHER" id="PTHR11844">
    <property type="entry name" value="METALLOPROTEASE INHIBITOR"/>
    <property type="match status" value="1"/>
</dbReference>
<dbReference type="PANTHER" id="PTHR11844:SF20">
    <property type="entry name" value="METALLOPROTEINASE INHIBITOR 1"/>
    <property type="match status" value="1"/>
</dbReference>
<dbReference type="Pfam" id="PF00965">
    <property type="entry name" value="TIMP"/>
    <property type="match status" value="1"/>
</dbReference>
<dbReference type="SMART" id="SM00206">
    <property type="entry name" value="NTR"/>
    <property type="match status" value="1"/>
</dbReference>
<dbReference type="SUPFAM" id="SSF50242">
    <property type="entry name" value="TIMP-like"/>
    <property type="match status" value="1"/>
</dbReference>
<dbReference type="PROSITE" id="PS50189">
    <property type="entry name" value="NTR"/>
    <property type="match status" value="1"/>
</dbReference>
<dbReference type="PROSITE" id="PS00288">
    <property type="entry name" value="TIMP"/>
    <property type="match status" value="1"/>
</dbReference>
<comment type="function">
    <text evidence="1">Metalloproteinase inhibitor that functions by forming one to one complexes with target metalloproteinases, such as collagenases, and irreversibly inactivates them by binding to their catalytic zinc cofactor. Acts on MMP1, MMP2, MMP3, MMP7, MMP8, MMP9, MMP10, MMP11, MMP12, MMP13 and MMP16. Does not act on MMP14. Also functions as a growth factor that regulates cell differentiation, migration and cell death and activates cellular signaling cascades via CD63 and ITGB1. Plays a role in integrin signaling (By similarity).</text>
</comment>
<comment type="subunit">
    <text evidence="1">Interacts with MMP1, MMP3, MMP10 and MMP13, but has only very low affinity for MMP14. Interacts with CD63; identified in a complex with CD63 and ITGB1 (By similarity).</text>
</comment>
<comment type="subcellular location">
    <subcellularLocation>
        <location evidence="1">Secreted</location>
    </subcellularLocation>
</comment>
<comment type="PTM">
    <text evidence="1">The activity of TIMP1 is dependent on the presence of disulfide bonds.</text>
</comment>
<comment type="PTM">
    <text evidence="1">N-glycosylated.</text>
</comment>
<comment type="similarity">
    <text evidence="6">Belongs to the protease inhibitor I35 (TIMP) family.</text>
</comment>
<feature type="signal peptide" evidence="1">
    <location>
        <begin position="1"/>
        <end position="23"/>
    </location>
</feature>
<feature type="chain" id="PRO_0000305906" description="Metalloproteinase inhibitor 1">
    <location>
        <begin position="24"/>
        <end position="207"/>
    </location>
</feature>
<feature type="domain" description="NTR" evidence="5">
    <location>
        <begin position="24"/>
        <end position="147"/>
    </location>
</feature>
<feature type="region of interest" description="Involved in metalloproteinase-binding" evidence="3">
    <location>
        <begin position="24"/>
        <end position="27"/>
    </location>
</feature>
<feature type="region of interest" description="Involved in metalloproteinase-binding" evidence="3">
    <location>
        <begin position="90"/>
        <end position="91"/>
    </location>
</feature>
<feature type="binding site" evidence="3">
    <location>
        <position position="24"/>
    </location>
    <ligand>
        <name>Zn(2+)</name>
        <dbReference type="ChEBI" id="CHEBI:29105"/>
        <note>ligand shared with metalloproteinase partner</note>
    </ligand>
</feature>
<feature type="site" description="Involved in metalloproteinase-binding" evidence="3">
    <location>
        <position position="37"/>
    </location>
</feature>
<feature type="modified residue" description="Phosphoserine" evidence="2">
    <location>
        <position position="178"/>
    </location>
</feature>
<feature type="glycosylation site" description="N-linked (GlcNAc...) asparagine" evidence="4">
    <location>
        <position position="53"/>
    </location>
</feature>
<feature type="glycosylation site" description="N-linked (GlcNAc...) asparagine" evidence="4">
    <location>
        <position position="101"/>
    </location>
</feature>
<feature type="disulfide bond" evidence="5">
    <location>
        <begin position="24"/>
        <end position="93"/>
    </location>
</feature>
<feature type="disulfide bond" evidence="5">
    <location>
        <begin position="26"/>
        <end position="122"/>
    </location>
</feature>
<feature type="disulfide bond" evidence="5">
    <location>
        <begin position="36"/>
        <end position="147"/>
    </location>
</feature>
<feature type="disulfide bond" evidence="5">
    <location>
        <begin position="150"/>
        <end position="197"/>
    </location>
</feature>
<feature type="disulfide bond" evidence="5">
    <location>
        <begin position="155"/>
        <end position="160"/>
    </location>
</feature>
<feature type="disulfide bond" evidence="5">
    <location>
        <begin position="168"/>
        <end position="189"/>
    </location>
</feature>
<accession>Q5RC60</accession>
<keyword id="KW-1015">Disulfide bond</keyword>
<keyword id="KW-0325">Glycoprotein</keyword>
<keyword id="KW-0339">Growth factor</keyword>
<keyword id="KW-0479">Metal-binding</keyword>
<keyword id="KW-0481">Metalloenzyme inhibitor</keyword>
<keyword id="KW-0483">Metalloprotease inhibitor</keyword>
<keyword id="KW-0597">Phosphoprotein</keyword>
<keyword id="KW-0646">Protease inhibitor</keyword>
<keyword id="KW-1185">Reference proteome</keyword>
<keyword id="KW-0964">Secreted</keyword>
<keyword id="KW-0732">Signal</keyword>
<keyword id="KW-0862">Zinc</keyword>
<evidence type="ECO:0000250" key="1"/>
<evidence type="ECO:0000250" key="2">
    <source>
        <dbReference type="UniProtKB" id="P01033"/>
    </source>
</evidence>
<evidence type="ECO:0000250" key="3">
    <source>
        <dbReference type="UniProtKB" id="P16035"/>
    </source>
</evidence>
<evidence type="ECO:0000255" key="4"/>
<evidence type="ECO:0000255" key="5">
    <source>
        <dbReference type="PROSITE-ProRule" id="PRU00295"/>
    </source>
</evidence>
<evidence type="ECO:0000305" key="6"/>
<sequence length="207" mass="23171">MAPFEPLASGILLLLWLIAPSRACTCVPPHPQTAFCNSDLVIRAKFVGTPEVNQTTLYQRYEIKMTKMYKGFQALGDAADIRFVYTPAMESVCGYFHRSHNRSEEFLIAGKLQDGLLHITTCSFVAPWNSLSLAQRRGFTKTYTVGCEECTVFPCLSIPCKLQSGTHCLWTDQLLQGSEKGFQSRHLACLPREPGLCTWQSLRSQIA</sequence>
<proteinExistence type="evidence at transcript level"/>
<reference key="1">
    <citation type="submission" date="2004-11" db="EMBL/GenBank/DDBJ databases">
        <authorList>
            <consortium name="The German cDNA consortium"/>
        </authorList>
    </citation>
    <scope>NUCLEOTIDE SEQUENCE [LARGE SCALE MRNA]</scope>
    <source>
        <tissue>Heart</tissue>
    </source>
</reference>
<organism>
    <name type="scientific">Pongo abelii</name>
    <name type="common">Sumatran orangutan</name>
    <name type="synonym">Pongo pygmaeus abelii</name>
    <dbReference type="NCBI Taxonomy" id="9601"/>
    <lineage>
        <taxon>Eukaryota</taxon>
        <taxon>Metazoa</taxon>
        <taxon>Chordata</taxon>
        <taxon>Craniata</taxon>
        <taxon>Vertebrata</taxon>
        <taxon>Euteleostomi</taxon>
        <taxon>Mammalia</taxon>
        <taxon>Eutheria</taxon>
        <taxon>Euarchontoglires</taxon>
        <taxon>Primates</taxon>
        <taxon>Haplorrhini</taxon>
        <taxon>Catarrhini</taxon>
        <taxon>Hominidae</taxon>
        <taxon>Pongo</taxon>
    </lineage>
</organism>
<protein>
    <recommendedName>
        <fullName>Metalloproteinase inhibitor 1</fullName>
    </recommendedName>
    <alternativeName>
        <fullName>Tissue inhibitor of metalloproteinases 1</fullName>
        <shortName>TIMP-1</shortName>
    </alternativeName>
</protein>